<keyword id="KW-0328">Glycosyltransferase</keyword>
<keyword id="KW-0808">Transferase</keyword>
<gene>
    <name evidence="1" type="primary">wecG</name>
    <name evidence="1" type="synonym">rffM</name>
    <name type="ordered locus">YPDSF_3473</name>
</gene>
<comment type="function">
    <text evidence="1">Catalyzes the synthesis of Und-PP-GlcNAc-ManNAcA (Lipid II), the second lipid-linked intermediate involved in enterobacterial common antigen (ECA) synthesis.</text>
</comment>
<comment type="catalytic activity">
    <reaction evidence="1">
        <text>UDP-N-acetyl-alpha-D-mannosaminouronate + N-acetyl-alpha-D-glucosaminyl-di-trans,octa-cis-undecaprenyl diphosphate = beta-D-ManNAcA-(1-&gt;4)-alpha-D-GlcNAc-di-trans,octa-cis-undecaprenyl diphosphate + UDP + H(+)</text>
        <dbReference type="Rhea" id="RHEA:28366"/>
        <dbReference type="ChEBI" id="CHEBI:15378"/>
        <dbReference type="ChEBI" id="CHEBI:58223"/>
        <dbReference type="ChEBI" id="CHEBI:61495"/>
        <dbReference type="ChEBI" id="CHEBI:62959"/>
        <dbReference type="ChEBI" id="CHEBI:70731"/>
        <dbReference type="EC" id="2.4.1.180"/>
    </reaction>
</comment>
<comment type="pathway">
    <text evidence="1">Bacterial outer membrane biogenesis; enterobacterial common antigen biosynthesis.</text>
</comment>
<comment type="similarity">
    <text evidence="1">Belongs to the glycosyltransferase 26 family.</text>
</comment>
<protein>
    <recommendedName>
        <fullName evidence="1">UDP-N-acetyl-D-mannosaminuronic acid transferase</fullName>
        <shortName evidence="1">UDP-ManNAcA transferase</shortName>
        <ecNumber evidence="1">2.4.1.180</ecNumber>
    </recommendedName>
</protein>
<evidence type="ECO:0000255" key="1">
    <source>
        <dbReference type="HAMAP-Rule" id="MF_01001"/>
    </source>
</evidence>
<accession>A4TRB4</accession>
<organism>
    <name type="scientific">Yersinia pestis (strain Pestoides F)</name>
    <dbReference type="NCBI Taxonomy" id="386656"/>
    <lineage>
        <taxon>Bacteria</taxon>
        <taxon>Pseudomonadati</taxon>
        <taxon>Pseudomonadota</taxon>
        <taxon>Gammaproteobacteria</taxon>
        <taxon>Enterobacterales</taxon>
        <taxon>Yersiniaceae</taxon>
        <taxon>Yersinia</taxon>
    </lineage>
</organism>
<reference key="1">
    <citation type="submission" date="2007-02" db="EMBL/GenBank/DDBJ databases">
        <title>Complete sequence of chromosome of Yersinia pestis Pestoides F.</title>
        <authorList>
            <consortium name="US DOE Joint Genome Institute"/>
            <person name="Copeland A."/>
            <person name="Lucas S."/>
            <person name="Lapidus A."/>
            <person name="Barry K."/>
            <person name="Detter J.C."/>
            <person name="Glavina del Rio T."/>
            <person name="Hammon N."/>
            <person name="Israni S."/>
            <person name="Dalin E."/>
            <person name="Tice H."/>
            <person name="Pitluck S."/>
            <person name="Di Bartolo G."/>
            <person name="Chain P."/>
            <person name="Malfatti S."/>
            <person name="Shin M."/>
            <person name="Vergez L."/>
            <person name="Schmutz J."/>
            <person name="Larimer F."/>
            <person name="Land M."/>
            <person name="Hauser L."/>
            <person name="Worsham P."/>
            <person name="Chu M."/>
            <person name="Bearden S."/>
            <person name="Garcia E."/>
            <person name="Richardson P."/>
        </authorList>
    </citation>
    <scope>NUCLEOTIDE SEQUENCE [LARGE SCALE GENOMIC DNA]</scope>
    <source>
        <strain>Pestoides F</strain>
    </source>
</reference>
<sequence length="246" mass="27676">MEPNTVIPKYNVRGFEIWGFRDMAQVLDHLLGSGPVKTGTLVAMNAEKLLKAEDDTALCELIKNAEYLYADGISMVRAIRRKYPQAELSRVAGADLWEALMQRAGQQGTPVFLVGGKPDVLAETEAKLRAQWNVNLVGSQDGYFTPEQREALFARIAASGAAIVTVAMGSPKQEIFMRDCRKFYPDALYMGVGGTYDVFTSHVKRAPKIWQNMGLEWLYRLLAQPSRIRRQLKLLKFVGYYYSGRL</sequence>
<proteinExistence type="inferred from homology"/>
<name>WECG_YERPP</name>
<feature type="chain" id="PRO_1000062738" description="UDP-N-acetyl-D-mannosaminuronic acid transferase">
    <location>
        <begin position="1"/>
        <end position="246"/>
    </location>
</feature>
<dbReference type="EC" id="2.4.1.180" evidence="1"/>
<dbReference type="EMBL" id="CP000668">
    <property type="protein sequence ID" value="ABP41826.1"/>
    <property type="molecule type" value="Genomic_DNA"/>
</dbReference>
<dbReference type="RefSeq" id="WP_002211977.1">
    <property type="nucleotide sequence ID" value="NZ_CP009715.1"/>
</dbReference>
<dbReference type="SMR" id="A4TRB4"/>
<dbReference type="CAZy" id="GT26">
    <property type="family name" value="Glycosyltransferase Family 26"/>
</dbReference>
<dbReference type="GeneID" id="57974848"/>
<dbReference type="KEGG" id="ypp:YPDSF_3473"/>
<dbReference type="PATRIC" id="fig|386656.14.peg.851"/>
<dbReference type="UniPathway" id="UPA00566"/>
<dbReference type="GO" id="GO:0047241">
    <property type="term" value="F:lipopolysaccharide N-acetylmannosaminouronosyltransferase activity"/>
    <property type="evidence" value="ECO:0007669"/>
    <property type="project" value="UniProtKB-UniRule"/>
</dbReference>
<dbReference type="GO" id="GO:0009246">
    <property type="term" value="P:enterobacterial common antigen biosynthetic process"/>
    <property type="evidence" value="ECO:0007669"/>
    <property type="project" value="UniProtKB-UniRule"/>
</dbReference>
<dbReference type="CDD" id="cd06533">
    <property type="entry name" value="Glyco_transf_WecG_TagA"/>
    <property type="match status" value="1"/>
</dbReference>
<dbReference type="HAMAP" id="MF_01001">
    <property type="entry name" value="WecG_RffM"/>
    <property type="match status" value="1"/>
</dbReference>
<dbReference type="InterPro" id="IPR023085">
    <property type="entry name" value="UDP-ManNAcA_Trfase_WecG"/>
</dbReference>
<dbReference type="InterPro" id="IPR004629">
    <property type="entry name" value="WecG_TagA_CpsF"/>
</dbReference>
<dbReference type="NCBIfam" id="NF002980">
    <property type="entry name" value="PRK03692.1"/>
    <property type="match status" value="1"/>
</dbReference>
<dbReference type="NCBIfam" id="TIGR00696">
    <property type="entry name" value="wecG_tagA_cpsF"/>
    <property type="match status" value="1"/>
</dbReference>
<dbReference type="PANTHER" id="PTHR34136">
    <property type="match status" value="1"/>
</dbReference>
<dbReference type="PANTHER" id="PTHR34136:SF1">
    <property type="entry name" value="UDP-N-ACETYL-D-MANNOSAMINURONIC ACID TRANSFERASE"/>
    <property type="match status" value="1"/>
</dbReference>
<dbReference type="Pfam" id="PF03808">
    <property type="entry name" value="Glyco_tran_WecG"/>
    <property type="match status" value="1"/>
</dbReference>